<sequence length="425" mass="49169">MYEYSFNPNIDHEPGSVESQQSTIYSDSDDSDDSFLDDEVIPPKEQAMRKIEFALADIKRQMDNKEKSLTLRISTSKSHFCLRYTAKRKGKLDRDLHCLHQVYDLLENDKRSTKRELYYEHKAVYGNQKYLDSSIKSICELLNESRANLNILSCGRGIIRGAITFLVENVGVIDARVQEVLITDALLFSNIISEADFILVVEKDTTFQKLMDENFQAMFPRGILATSKGYPDIATRNVLKMLSEKRKFPIYGLFDADPHGIEIYLTYKYGPTKEFAEGRGAFVPTIEWIGLFPTDFHRFTIDQSQCLPLVRTDFVKIEKMIPRSIQLGEIVVTRELDWMIQNKFKMELESINMCGQEYMARFLIAPRVMSIEKEIPIQPETIINEYHEDSQCSLSTDDDREAKDDDYIDSDAEEKFQNMIDNDSD</sequence>
<protein>
    <recommendedName>
        <fullName>Meiotic recombination protein spo-11</fullName>
        <ecNumber evidence="6">5.6.2.2</ecNumber>
    </recommendedName>
</protein>
<organism>
    <name type="scientific">Caenorhabditis elegans</name>
    <dbReference type="NCBI Taxonomy" id="6239"/>
    <lineage>
        <taxon>Eukaryota</taxon>
        <taxon>Metazoa</taxon>
        <taxon>Ecdysozoa</taxon>
        <taxon>Nematoda</taxon>
        <taxon>Chromadorea</taxon>
        <taxon>Rhabditida</taxon>
        <taxon>Rhabditina</taxon>
        <taxon>Rhabditomorpha</taxon>
        <taxon>Rhabditoidea</taxon>
        <taxon>Rhabditidae</taxon>
        <taxon>Peloderinae</taxon>
        <taxon>Caenorhabditis</taxon>
    </lineage>
</organism>
<keyword id="KW-0238">DNA-binding</keyword>
<keyword id="KW-0413">Isomerase</keyword>
<keyword id="KW-0460">Magnesium</keyword>
<keyword id="KW-0469">Meiosis</keyword>
<keyword id="KW-0479">Metal-binding</keyword>
<keyword id="KW-0539">Nucleus</keyword>
<keyword id="KW-1185">Reference proteome</keyword>
<keyword id="KW-0799">Topoisomerase</keyword>
<feature type="chain" id="PRO_0000145476" description="Meiotic recombination protein spo-11">
    <location>
        <begin position="1"/>
        <end position="425"/>
    </location>
</feature>
<feature type="domain" description="Topo IIA-type catalytic" evidence="3">
    <location>
        <begin position="15"/>
        <end position="158"/>
    </location>
</feature>
<feature type="region of interest" description="Disordered" evidence="4">
    <location>
        <begin position="1"/>
        <end position="38"/>
    </location>
</feature>
<feature type="compositionally biased region" description="Acidic residues" evidence="4">
    <location>
        <begin position="27"/>
        <end position="38"/>
    </location>
</feature>
<feature type="active site" description="O-(5'-phospho-DNA)-tyrosine intermediate" evidence="3">
    <location>
        <position position="119"/>
    </location>
</feature>
<feature type="binding site" evidence="2">
    <location>
        <position position="202"/>
    </location>
    <ligand>
        <name>Mg(2+)</name>
        <dbReference type="ChEBI" id="CHEBI:18420"/>
    </ligand>
</feature>
<feature type="binding site" evidence="2">
    <location>
        <position position="255"/>
    </location>
    <ligand>
        <name>Mg(2+)</name>
        <dbReference type="ChEBI" id="CHEBI:18420"/>
    </ligand>
</feature>
<comment type="function">
    <text evidence="5">Required for meiotic recombination. Mediates DNA cleavage that forms the double-strand breaks (DSB) that initiate meiotic recombination.</text>
</comment>
<comment type="catalytic activity">
    <reaction evidence="3 6">
        <text>ATP-dependent breakage, passage and rejoining of double-stranded DNA.</text>
        <dbReference type="EC" id="5.6.2.2"/>
    </reaction>
</comment>
<comment type="cofactor">
    <cofactor evidence="2">
        <name>Mg(2+)</name>
        <dbReference type="ChEBI" id="CHEBI:18420"/>
    </cofactor>
</comment>
<comment type="subcellular location">
    <subcellularLocation>
        <location evidence="1">Nucleus</location>
    </subcellularLocation>
</comment>
<comment type="similarity">
    <text evidence="6">Belongs to the TOP6A family.</text>
</comment>
<gene>
    <name type="primary">spo-11</name>
    <name type="ORF">T05E11.4</name>
</gene>
<proteinExistence type="inferred from homology"/>
<dbReference type="EC" id="5.6.2.2" evidence="6"/>
<dbReference type="EMBL" id="Z68751">
    <property type="protein sequence ID" value="CAA92974.1"/>
    <property type="molecule type" value="Genomic_DNA"/>
</dbReference>
<dbReference type="PIR" id="T24522">
    <property type="entry name" value="T24522"/>
</dbReference>
<dbReference type="RefSeq" id="NP_502081.1">
    <property type="nucleotide sequence ID" value="NM_069680.5"/>
</dbReference>
<dbReference type="SMR" id="Q22236"/>
<dbReference type="BioGRID" id="56264">
    <property type="interactions" value="2"/>
</dbReference>
<dbReference type="FunCoup" id="Q22236">
    <property type="interactions" value="349"/>
</dbReference>
<dbReference type="STRING" id="6239.T05E11.4a.1"/>
<dbReference type="PaxDb" id="6239-T05E11.4"/>
<dbReference type="EnsemblMetazoa" id="T05E11.4a.1">
    <property type="protein sequence ID" value="T05E11.4a.1"/>
    <property type="gene ID" value="WBGene00004985"/>
</dbReference>
<dbReference type="GeneID" id="191771"/>
<dbReference type="KEGG" id="cel:CELE_T05E11.4"/>
<dbReference type="UCSC" id="T05E11.4">
    <property type="organism name" value="c. elegans"/>
</dbReference>
<dbReference type="AGR" id="WB:WBGene00004985"/>
<dbReference type="CTD" id="191771"/>
<dbReference type="WormBase" id="T05E11.4a">
    <property type="protein sequence ID" value="CE06363"/>
    <property type="gene ID" value="WBGene00004985"/>
    <property type="gene designation" value="spo-11"/>
</dbReference>
<dbReference type="eggNOG" id="KOG2795">
    <property type="taxonomic scope" value="Eukaryota"/>
</dbReference>
<dbReference type="GeneTree" id="ENSGT00390000001787"/>
<dbReference type="InParanoid" id="Q22236"/>
<dbReference type="OMA" id="IETAGMF"/>
<dbReference type="OrthoDB" id="5377392at2759"/>
<dbReference type="PhylomeDB" id="Q22236"/>
<dbReference type="PRO" id="PR:Q22236"/>
<dbReference type="Proteomes" id="UP000001940">
    <property type="component" value="Chromosome IV"/>
</dbReference>
<dbReference type="Bgee" id="WBGene00004985">
    <property type="expression patterns" value="Expressed in germ line (C elegans) and 4 other cell types or tissues"/>
</dbReference>
<dbReference type="ExpressionAtlas" id="Q22236">
    <property type="expression patterns" value="baseline and differential"/>
</dbReference>
<dbReference type="GO" id="GO:0000228">
    <property type="term" value="C:nuclear chromosome"/>
    <property type="evidence" value="ECO:0000318"/>
    <property type="project" value="GO_Central"/>
</dbReference>
<dbReference type="GO" id="GO:0005524">
    <property type="term" value="F:ATP binding"/>
    <property type="evidence" value="ECO:0007669"/>
    <property type="project" value="InterPro"/>
</dbReference>
<dbReference type="GO" id="GO:0003677">
    <property type="term" value="F:DNA binding"/>
    <property type="evidence" value="ECO:0000318"/>
    <property type="project" value="GO_Central"/>
</dbReference>
<dbReference type="GO" id="GO:0003918">
    <property type="term" value="F:DNA topoisomerase type II (double strand cut, ATP-hydrolyzing) activity"/>
    <property type="evidence" value="ECO:0007669"/>
    <property type="project" value="InterPro"/>
</dbReference>
<dbReference type="GO" id="GO:0046872">
    <property type="term" value="F:metal ion binding"/>
    <property type="evidence" value="ECO:0007669"/>
    <property type="project" value="UniProtKB-KW"/>
</dbReference>
<dbReference type="GO" id="GO:0051321">
    <property type="term" value="P:meiotic cell cycle"/>
    <property type="evidence" value="ECO:0000315"/>
    <property type="project" value="WormBase"/>
</dbReference>
<dbReference type="GO" id="GO:0042138">
    <property type="term" value="P:meiotic DNA double-strand break formation"/>
    <property type="evidence" value="ECO:0000318"/>
    <property type="project" value="GO_Central"/>
</dbReference>
<dbReference type="GO" id="GO:0000706">
    <property type="term" value="P:meiotic DNA double-strand break processing"/>
    <property type="evidence" value="ECO:0000315"/>
    <property type="project" value="UniProtKB"/>
</dbReference>
<dbReference type="GO" id="GO:0007131">
    <property type="term" value="P:reciprocal meiotic recombination"/>
    <property type="evidence" value="ECO:0000318"/>
    <property type="project" value="GO_Central"/>
</dbReference>
<dbReference type="CDD" id="cd00223">
    <property type="entry name" value="TOPRIM_TopoIIB_SPO"/>
    <property type="match status" value="1"/>
</dbReference>
<dbReference type="FunFam" id="1.10.10.10:FF:001328">
    <property type="entry name" value="Meiotic recombination protein spo-11"/>
    <property type="match status" value="1"/>
</dbReference>
<dbReference type="Gene3D" id="3.40.1360.10">
    <property type="match status" value="1"/>
</dbReference>
<dbReference type="Gene3D" id="1.10.10.10">
    <property type="entry name" value="Winged helix-like DNA-binding domain superfamily/Winged helix DNA-binding domain"/>
    <property type="match status" value="1"/>
</dbReference>
<dbReference type="InterPro" id="IPR013048">
    <property type="entry name" value="Meiotic_Spo11"/>
</dbReference>
<dbReference type="InterPro" id="IPR002815">
    <property type="entry name" value="Spo11/TopoVI_A"/>
</dbReference>
<dbReference type="InterPro" id="IPR013049">
    <property type="entry name" value="Spo11/TopoVI_A_N"/>
</dbReference>
<dbReference type="InterPro" id="IPR036078">
    <property type="entry name" value="Spo11/TopoVI_A_sf"/>
</dbReference>
<dbReference type="InterPro" id="IPR034136">
    <property type="entry name" value="TOPRIM_Topo6A/Spo11"/>
</dbReference>
<dbReference type="InterPro" id="IPR036388">
    <property type="entry name" value="WH-like_DNA-bd_sf"/>
</dbReference>
<dbReference type="PANTHER" id="PTHR10848">
    <property type="entry name" value="MEIOTIC RECOMBINATION PROTEIN SPO11"/>
    <property type="match status" value="1"/>
</dbReference>
<dbReference type="PANTHER" id="PTHR10848:SF0">
    <property type="entry name" value="MEIOTIC RECOMBINATION PROTEIN SPO11"/>
    <property type="match status" value="1"/>
</dbReference>
<dbReference type="Pfam" id="PF21180">
    <property type="entry name" value="TOP6A-Spo11_Toprim"/>
    <property type="match status" value="1"/>
</dbReference>
<dbReference type="Pfam" id="PF04406">
    <property type="entry name" value="TP6A_N"/>
    <property type="match status" value="1"/>
</dbReference>
<dbReference type="PRINTS" id="PR01551">
    <property type="entry name" value="SPO11HOMOLOG"/>
</dbReference>
<dbReference type="PRINTS" id="PR01550">
    <property type="entry name" value="TOP6AFAMILY"/>
</dbReference>
<dbReference type="SUPFAM" id="SSF56726">
    <property type="entry name" value="DNA topoisomerase IV, alpha subunit"/>
    <property type="match status" value="1"/>
</dbReference>
<dbReference type="PROSITE" id="PS52041">
    <property type="entry name" value="TOPO_IIB"/>
    <property type="match status" value="1"/>
</dbReference>
<name>SPO11_CAEEL</name>
<reference key="1">
    <citation type="journal article" date="1998" name="Science">
        <title>Genome sequence of the nematode C. elegans: a platform for investigating biology.</title>
        <authorList>
            <consortium name="The C. elegans sequencing consortium"/>
        </authorList>
    </citation>
    <scope>NUCLEOTIDE SEQUENCE [LARGE SCALE GENOMIC DNA]</scope>
    <source>
        <strain>Bristol N2</strain>
    </source>
</reference>
<reference key="2">
    <citation type="journal article" date="1998" name="Cell">
        <title>Meiotic recombination in C. elegans initiates by a conserved mechanism and is dispensable for homologous chromosome synapsis.</title>
        <authorList>
            <person name="Dernburg A.F."/>
            <person name="McDonald K."/>
            <person name="Moulder G."/>
            <person name="Barstead R."/>
            <person name="Dresser M."/>
            <person name="Villeneuve A.M."/>
        </authorList>
    </citation>
    <scope>FUNCTION</scope>
</reference>
<accession>Q22236</accession>
<evidence type="ECO:0000250" key="1"/>
<evidence type="ECO:0000250" key="2">
    <source>
        <dbReference type="UniProtKB" id="Q57815"/>
    </source>
</evidence>
<evidence type="ECO:0000255" key="3">
    <source>
        <dbReference type="PROSITE-ProRule" id="PRU01385"/>
    </source>
</evidence>
<evidence type="ECO:0000256" key="4">
    <source>
        <dbReference type="SAM" id="MobiDB-lite"/>
    </source>
</evidence>
<evidence type="ECO:0000269" key="5">
    <source>
    </source>
</evidence>
<evidence type="ECO:0000305" key="6"/>